<feature type="chain" id="PRO_0000392985" description="CST complex subunit CTC1">
    <location>
        <begin position="1"/>
        <end position="1272"/>
    </location>
</feature>
<feature type="splice variant" id="VSP_038871" description="In isoform 3." evidence="4">
    <location>
        <begin position="1"/>
        <end position="440"/>
    </location>
</feature>
<feature type="splice variant" id="VSP_038872" description="In isoform 2." evidence="5">
    <original>GGIFTEFCMHESCGCNSEARDCNLKL</original>
    <variation>VKWVGSLLNSACMSHADAIVKLVIAT</variation>
    <location>
        <begin position="456"/>
        <end position="481"/>
    </location>
</feature>
<feature type="splice variant" id="VSP_038873" description="In isoform 2." evidence="5">
    <location>
        <begin position="482"/>
        <end position="1272"/>
    </location>
</feature>
<feature type="splice variant" id="VSP_038874" description="In isoform 3." evidence="4">
    <original>VLSVYLLVLQTRSDDPSENECRNNIDIPLA</original>
    <variation>FIFWFSKLDLMIPQKTNVGTILIYHLQDLW</variation>
    <location>
        <begin position="1075"/>
        <end position="1104"/>
    </location>
</feature>
<feature type="splice variant" id="VSP_038875" description="In isoform 3." evidence="4">
    <location>
        <begin position="1105"/>
        <end position="1272"/>
    </location>
</feature>
<feature type="sequence conflict" description="In Ref. 1; ACX37401." evidence="5" ref="1">
    <original>K</original>
    <variation>E</variation>
    <location>
        <position position="435"/>
    </location>
</feature>
<keyword id="KW-0025">Alternative splicing</keyword>
<keyword id="KW-0158">Chromosome</keyword>
<keyword id="KW-0238">DNA-binding</keyword>
<keyword id="KW-0539">Nucleus</keyword>
<keyword id="KW-1185">Reference proteome</keyword>
<keyword id="KW-0779">Telomere</keyword>
<comment type="function">
    <text evidence="1 2">Component of the CST complex, a complex that binds to single-stranded DNA and is required to protect telomeres from DNA degradation. The CST complex binds single-stranded DNA with high affinity in a sequence-independent manner, while isolated subunits bind DNA with low affinity by themselves (PubMed:19854131). Associates with enzymatically active telomerase (PubMed:25329641).</text>
</comment>
<comment type="subunit">
    <text evidence="2">Component of the CST complex, composed of CTC1, TEN1 and STN1. Interacts with POT1A (PubMed:25329641).</text>
</comment>
<comment type="subcellular location">
    <subcellularLocation>
        <location evidence="1">Nucleus</location>
    </subcellularLocation>
    <subcellularLocation>
        <location evidence="1">Chromosome</location>
        <location evidence="1">Telomere</location>
    </subcellularLocation>
</comment>
<comment type="alternative products">
    <event type="alternative splicing"/>
    <isoform>
        <id>D0EL35-1</id>
        <name>1</name>
        <sequence type="displayed"/>
    </isoform>
    <isoform>
        <id>D0EL35-2</id>
        <name>2</name>
        <sequence type="described" ref="VSP_038872 VSP_038873"/>
    </isoform>
    <isoform>
        <id>D0EL35-3</id>
        <name>3</name>
        <sequence type="described" ref="VSP_038871 VSP_038874 VSP_038875"/>
    </isoform>
</comment>
<comment type="disruption phenotype">
    <text evidence="1">Severe telomere deprotection accompanied by a rapid onset of developmental defects and sterility. The large majority of plants have grossly distorted floral phyllotaxy with an irregular branching pattern and fasciated (thick and broad) main and lateral stems and siliques. Although most mutants produce an influorescence bolt, this structure is highly variable in size, ranging from very short to wild-type. Flowers and siliques are often fused, and seed yield is typically reduced to 10% of wild-type. The germination efficiency of the few seeds that could be recovered was extremely low. Telomeric and subtelomeric tracts are dramatically eroded, and chromosome ends exhibit increased G overhangs, recombination, and end-to-end fusions.</text>
</comment>
<comment type="similarity">
    <text evidence="5">Belongs to the CTC1 family.</text>
</comment>
<comment type="sequence caution" evidence="5">
    <conflict type="erroneous gene model prediction">
        <sequence resource="EMBL-CDS" id="CAB39635"/>
    </conflict>
</comment>
<comment type="sequence caution" evidence="5">
    <conflict type="erroneous gene model prediction">
        <sequence resource="EMBL-CDS" id="CAB78091"/>
    </conflict>
</comment>
<accession>D0EL35</accession>
<accession>B3H4T9</accession>
<accession>Q0WL26</accession>
<accession>Q9SZ84</accession>
<proteinExistence type="evidence at protein level"/>
<organism>
    <name type="scientific">Arabidopsis thaliana</name>
    <name type="common">Mouse-ear cress</name>
    <dbReference type="NCBI Taxonomy" id="3702"/>
    <lineage>
        <taxon>Eukaryota</taxon>
        <taxon>Viridiplantae</taxon>
        <taxon>Streptophyta</taxon>
        <taxon>Embryophyta</taxon>
        <taxon>Tracheophyta</taxon>
        <taxon>Spermatophyta</taxon>
        <taxon>Magnoliopsida</taxon>
        <taxon>eudicotyledons</taxon>
        <taxon>Gunneridae</taxon>
        <taxon>Pentapetalae</taxon>
        <taxon>rosids</taxon>
        <taxon>malvids</taxon>
        <taxon>Brassicales</taxon>
        <taxon>Brassicaceae</taxon>
        <taxon>Camelineae</taxon>
        <taxon>Arabidopsis</taxon>
    </lineage>
</organism>
<evidence type="ECO:0000269" key="1">
    <source>
    </source>
</evidence>
<evidence type="ECO:0000269" key="2">
    <source>
    </source>
</evidence>
<evidence type="ECO:0000303" key="3">
    <source>
    </source>
</evidence>
<evidence type="ECO:0000303" key="4">
    <source ref="4"/>
</evidence>
<evidence type="ECO:0000305" key="5"/>
<evidence type="ECO:0000312" key="6">
    <source>
        <dbReference type="Araport" id="AT4G09680"/>
    </source>
</evidence>
<evidence type="ECO:0000312" key="7">
    <source>
        <dbReference type="EMBL" id="CAB39635.1"/>
    </source>
</evidence>
<sequence>MENTTILTVKDLVNEGIAVTGASSLFSSAASHSSSESTSTNPKSHPGAVDSDFSRKFLTPLNYPTVIFGTVALPSETLKCPNRYCFRFTDGDLTICCDILGFEFRAIGSKICVLSWNFLPMNHSGGFLEIINWKFVDSGSLLSRCSGISSFPLIPSLYSSQNGDRKSRYSVCGVLESISPVSVVPCMDGVSSDSVNLPGFLVHVMACECKVYSRDAIDCGHAFERSVFVYFCGLEAASWHPVVMKLVGRNVALSGLKRKLVYVRGDSLLVFVTTENSVLHPPWLSKKGTVSKTVVDRRGNCGSYRGYVRGLYLKGKLVEMDEDVWLLLTDQILNRSHSIRTGSLIFIRNVHFVNTKFPWGEVLILGACFKTSITVEFFSPFETSCLVDSCRQTSLSLYVESLSFPARLWTLLVRISFEKFNRMPSDKEILRSCQKDELTKMYAESRIPPSMFQPRGGIFTEFCMHESCGCNSEARDCNLKLVMPISSFVHHVKVMLNELLSQIKKDFSASDCLSHSSSTWKRYNNTNPKTLRSEDTGVILLGRLKISSSGRLQLHDRTSSIDVLTPDLLSDRNASRICEVPDYYLIIEGIPESMLHMPFLKNPFRCSSVLNPTPLAIKNTLTVPFSLSLGTASCKHLLKHHPFDWRHDFNEFKEGFFHLFRVTHKFPILKNGHPGMPDCTSVFIEALVLPWDLICTVTEEEAAAPNFEEHDTSQEIRPHKRCKTNNGLQSQSFLSVPHEISCQMTIRCASSHCLVATATLSNLTENKSGKMHSAMRVLLEFIPECSNYYGLQIGGCYLMKHGSDDSFCVGRSGISNNDKINFRPETRLWSLEFSFDEVLTHDGSMDVHPLVSSQPSFAVEQQNVSSRQPCSDVSLLLPYDAKGLFSVFLNDLEGLNKPLAAGKDNNNISCCTQSETIMHAEPSRLLPSNSLFPEGNLATFRGDVVAVDAVTSSVVDVSSSYCINVLVNHQMVKIFGPLRRHSYLTGFGFGTNATFYRILGTGEQNSFVLTSASFIKINSRKALDSPPLEKPTHGAALCLPKITPQEFVPCILAGPACNSFSGNEDNQQIKFACKVLSVYLLVLQTRSDDPSENECRNNIDIPLAGFVVDDGSSTYLCWTSGERAFTILRLHEELPEETIDVVQWTRRYSNWGTTAYHLDQIVRVHKRIVMKCNGSQIDVLFQDITIAVTSDQLLTKSEDKFLKWLILNAISGPIWEVAASSMDMKMIEHLEREQCVEMETSRYNLQSVWGNEVCQVDPLVRAWSLLQGLLNS</sequence>
<reference key="1">
    <citation type="journal article" date="2009" name="Mol. Cell">
        <title>Conserved telomere maintenance component 1 interacts with STN1 and maintains chromosome ends in higher eukaryotes.</title>
        <authorList>
            <person name="Surovtseva Y.V."/>
            <person name="Churikov D."/>
            <person name="Boltz K.A."/>
            <person name="Song X."/>
            <person name="Lamb J.C."/>
            <person name="Warrington R."/>
            <person name="Leehy K."/>
            <person name="Heacock M."/>
            <person name="Price C.M."/>
            <person name="Shippen D.E."/>
        </authorList>
    </citation>
    <scope>NUCLEOTIDE SEQUENCE [MRNA] (ISOFORM 1)</scope>
    <scope>FUNCTION</scope>
    <scope>SUBCELLULAR LOCATION</scope>
    <scope>INTERACTION WITH STN1</scope>
    <scope>DISRUPTION PHENOTYPE</scope>
</reference>
<reference key="2">
    <citation type="journal article" date="1999" name="Nature">
        <title>Sequence and analysis of chromosome 4 of the plant Arabidopsis thaliana.</title>
        <authorList>
            <person name="Mayer K.F.X."/>
            <person name="Schueller C."/>
            <person name="Wambutt R."/>
            <person name="Murphy G."/>
            <person name="Volckaert G."/>
            <person name="Pohl T."/>
            <person name="Duesterhoeft A."/>
            <person name="Stiekema W."/>
            <person name="Entian K.-D."/>
            <person name="Terryn N."/>
            <person name="Harris B."/>
            <person name="Ansorge W."/>
            <person name="Brandt P."/>
            <person name="Grivell L.A."/>
            <person name="Rieger M."/>
            <person name="Weichselgartner M."/>
            <person name="de Simone V."/>
            <person name="Obermaier B."/>
            <person name="Mache R."/>
            <person name="Mueller M."/>
            <person name="Kreis M."/>
            <person name="Delseny M."/>
            <person name="Puigdomenech P."/>
            <person name="Watson M."/>
            <person name="Schmidtheini T."/>
            <person name="Reichert B."/>
            <person name="Portetelle D."/>
            <person name="Perez-Alonso M."/>
            <person name="Boutry M."/>
            <person name="Bancroft I."/>
            <person name="Vos P."/>
            <person name="Hoheisel J."/>
            <person name="Zimmermann W."/>
            <person name="Wedler H."/>
            <person name="Ridley P."/>
            <person name="Langham S.-A."/>
            <person name="McCullagh B."/>
            <person name="Bilham L."/>
            <person name="Robben J."/>
            <person name="van der Schueren J."/>
            <person name="Grymonprez B."/>
            <person name="Chuang Y.-J."/>
            <person name="Vandenbussche F."/>
            <person name="Braeken M."/>
            <person name="Weltjens I."/>
            <person name="Voet M."/>
            <person name="Bastiaens I."/>
            <person name="Aert R."/>
            <person name="Defoor E."/>
            <person name="Weitzenegger T."/>
            <person name="Bothe G."/>
            <person name="Ramsperger U."/>
            <person name="Hilbert H."/>
            <person name="Braun M."/>
            <person name="Holzer E."/>
            <person name="Brandt A."/>
            <person name="Peters S."/>
            <person name="van Staveren M."/>
            <person name="Dirkse W."/>
            <person name="Mooijman P."/>
            <person name="Klein Lankhorst R."/>
            <person name="Rose M."/>
            <person name="Hauf J."/>
            <person name="Koetter P."/>
            <person name="Berneiser S."/>
            <person name="Hempel S."/>
            <person name="Feldpausch M."/>
            <person name="Lamberth S."/>
            <person name="Van den Daele H."/>
            <person name="De Keyser A."/>
            <person name="Buysshaert C."/>
            <person name="Gielen J."/>
            <person name="Villarroel R."/>
            <person name="De Clercq R."/>
            <person name="van Montagu M."/>
            <person name="Rogers J."/>
            <person name="Cronin A."/>
            <person name="Quail M.A."/>
            <person name="Bray-Allen S."/>
            <person name="Clark L."/>
            <person name="Doggett J."/>
            <person name="Hall S."/>
            <person name="Kay M."/>
            <person name="Lennard N."/>
            <person name="McLay K."/>
            <person name="Mayes R."/>
            <person name="Pettett A."/>
            <person name="Rajandream M.A."/>
            <person name="Lyne M."/>
            <person name="Benes V."/>
            <person name="Rechmann S."/>
            <person name="Borkova D."/>
            <person name="Bloecker H."/>
            <person name="Scharfe M."/>
            <person name="Grimm M."/>
            <person name="Loehnert T.-H."/>
            <person name="Dose S."/>
            <person name="de Haan M."/>
            <person name="Maarse A.C."/>
            <person name="Schaefer M."/>
            <person name="Mueller-Auer S."/>
            <person name="Gabel C."/>
            <person name="Fuchs M."/>
            <person name="Fartmann B."/>
            <person name="Granderath K."/>
            <person name="Dauner D."/>
            <person name="Herzl A."/>
            <person name="Neumann S."/>
            <person name="Argiriou A."/>
            <person name="Vitale D."/>
            <person name="Liguori R."/>
            <person name="Piravandi E."/>
            <person name="Massenet O."/>
            <person name="Quigley F."/>
            <person name="Clabauld G."/>
            <person name="Muendlein A."/>
            <person name="Felber R."/>
            <person name="Schnabl S."/>
            <person name="Hiller R."/>
            <person name="Schmidt W."/>
            <person name="Lecharny A."/>
            <person name="Aubourg S."/>
            <person name="Chefdor F."/>
            <person name="Cooke R."/>
            <person name="Berger C."/>
            <person name="Monfort A."/>
            <person name="Casacuberta E."/>
            <person name="Gibbons T."/>
            <person name="Weber N."/>
            <person name="Vandenbol M."/>
            <person name="Bargues M."/>
            <person name="Terol J."/>
            <person name="Torres A."/>
            <person name="Perez-Perez A."/>
            <person name="Purnelle B."/>
            <person name="Bent E."/>
            <person name="Johnson S."/>
            <person name="Tacon D."/>
            <person name="Jesse T."/>
            <person name="Heijnen L."/>
            <person name="Schwarz S."/>
            <person name="Scholler P."/>
            <person name="Heber S."/>
            <person name="Francs P."/>
            <person name="Bielke C."/>
            <person name="Frishman D."/>
            <person name="Haase D."/>
            <person name="Lemcke K."/>
            <person name="Mewes H.-W."/>
            <person name="Stocker S."/>
            <person name="Zaccaria P."/>
            <person name="Bevan M."/>
            <person name="Wilson R.K."/>
            <person name="de la Bastide M."/>
            <person name="Habermann K."/>
            <person name="Parnell L."/>
            <person name="Dedhia N."/>
            <person name="Gnoj L."/>
            <person name="Schutz K."/>
            <person name="Huang E."/>
            <person name="Spiegel L."/>
            <person name="Sekhon M."/>
            <person name="Murray J."/>
            <person name="Sheet P."/>
            <person name="Cordes M."/>
            <person name="Abu-Threideh J."/>
            <person name="Stoneking T."/>
            <person name="Kalicki J."/>
            <person name="Graves T."/>
            <person name="Harmon G."/>
            <person name="Edwards J."/>
            <person name="Latreille P."/>
            <person name="Courtney L."/>
            <person name="Cloud J."/>
            <person name="Abbott A."/>
            <person name="Scott K."/>
            <person name="Johnson D."/>
            <person name="Minx P."/>
            <person name="Bentley D."/>
            <person name="Fulton B."/>
            <person name="Miller N."/>
            <person name="Greco T."/>
            <person name="Kemp K."/>
            <person name="Kramer J."/>
            <person name="Fulton L."/>
            <person name="Mardis E."/>
            <person name="Dante M."/>
            <person name="Pepin K."/>
            <person name="Hillier L.W."/>
            <person name="Nelson J."/>
            <person name="Spieth J."/>
            <person name="Ryan E."/>
            <person name="Andrews S."/>
            <person name="Geisel C."/>
            <person name="Layman D."/>
            <person name="Du H."/>
            <person name="Ali J."/>
            <person name="Berghoff A."/>
            <person name="Jones K."/>
            <person name="Drone K."/>
            <person name="Cotton M."/>
            <person name="Joshu C."/>
            <person name="Antonoiu B."/>
            <person name="Zidanic M."/>
            <person name="Strong C."/>
            <person name="Sun H."/>
            <person name="Lamar B."/>
            <person name="Yordan C."/>
            <person name="Ma P."/>
            <person name="Zhong J."/>
            <person name="Preston R."/>
            <person name="Vil D."/>
            <person name="Shekher M."/>
            <person name="Matero A."/>
            <person name="Shah R."/>
            <person name="Swaby I.K."/>
            <person name="O'Shaughnessy A."/>
            <person name="Rodriguez M."/>
            <person name="Hoffman J."/>
            <person name="Till S."/>
            <person name="Granat S."/>
            <person name="Shohdy N."/>
            <person name="Hasegawa A."/>
            <person name="Hameed A."/>
            <person name="Lodhi M."/>
            <person name="Johnson A."/>
            <person name="Chen E."/>
            <person name="Marra M.A."/>
            <person name="Martienssen R."/>
            <person name="McCombie W.R."/>
        </authorList>
    </citation>
    <scope>NUCLEOTIDE SEQUENCE [LARGE SCALE GENOMIC DNA]</scope>
    <source>
        <strain>cv. Columbia</strain>
    </source>
</reference>
<reference key="3">
    <citation type="journal article" date="2017" name="Plant J.">
        <title>Araport11: a complete reannotation of the Arabidopsis thaliana reference genome.</title>
        <authorList>
            <person name="Cheng C.Y."/>
            <person name="Krishnakumar V."/>
            <person name="Chan A.P."/>
            <person name="Thibaud-Nissen F."/>
            <person name="Schobel S."/>
            <person name="Town C.D."/>
        </authorList>
    </citation>
    <scope>GENOME REANNOTATION</scope>
    <source>
        <strain>cv. Columbia</strain>
    </source>
</reference>
<reference key="4">
    <citation type="submission" date="2006-07" db="EMBL/GenBank/DDBJ databases">
        <title>Large-scale analysis of RIKEN Arabidopsis full-length (RAFL) cDNAs.</title>
        <authorList>
            <person name="Totoki Y."/>
            <person name="Seki M."/>
            <person name="Ishida J."/>
            <person name="Nakajima M."/>
            <person name="Enju A."/>
            <person name="Kamiya A."/>
            <person name="Narusaka M."/>
            <person name="Shin-i T."/>
            <person name="Nakagawa M."/>
            <person name="Sakamoto N."/>
            <person name="Oishi K."/>
            <person name="Kohara Y."/>
            <person name="Kobayashi M."/>
            <person name="Toyoda A."/>
            <person name="Sakaki Y."/>
            <person name="Sakurai T."/>
            <person name="Iida K."/>
            <person name="Akiyama K."/>
            <person name="Satou M."/>
            <person name="Toyoda T."/>
            <person name="Konagaya A."/>
            <person name="Carninci P."/>
            <person name="Kawai J."/>
            <person name="Hayashizaki Y."/>
            <person name="Shinozaki K."/>
        </authorList>
    </citation>
    <scope>NUCLEOTIDE SEQUENCE [LARGE SCALE MRNA] (ISOFORM 3)</scope>
    <source>
        <strain>cv. Columbia</strain>
    </source>
</reference>
<reference key="5">
    <citation type="journal article" date="2014" name="PLoS Genet.">
        <title>POT1a and components of CST engage telomerase and regulate its activity in Arabidopsis.</title>
        <authorList>
            <person name="Renfrew K.B."/>
            <person name="Song X."/>
            <person name="Lee J.R."/>
            <person name="Arora A."/>
            <person name="Shippen D.E."/>
        </authorList>
    </citation>
    <scope>FUNCTION</scope>
    <scope>INTERACTION WITH POT1A</scope>
</reference>
<name>CTC1_ARATH</name>
<gene>
    <name evidence="3" type="primary">CTC1</name>
    <name evidence="6" type="ordered locus">At4g09680</name>
    <name evidence="7" type="ORF">F17A8.30</name>
</gene>
<protein>
    <recommendedName>
        <fullName evidence="3">CST complex subunit CTC1</fullName>
    </recommendedName>
    <alternativeName>
        <fullName evidence="3">Protein CONSERVED TELOMERE MAINTENANCE COMPONENT 1</fullName>
        <shortName evidence="3">AtCTC1</shortName>
    </alternativeName>
</protein>
<dbReference type="EMBL" id="GQ850537">
    <property type="protein sequence ID" value="ACX37401.1"/>
    <property type="molecule type" value="mRNA"/>
</dbReference>
<dbReference type="EMBL" id="AL049482">
    <property type="protein sequence ID" value="CAB39635.1"/>
    <property type="status" value="ALT_SEQ"/>
    <property type="molecule type" value="Genomic_DNA"/>
</dbReference>
<dbReference type="EMBL" id="AL161515">
    <property type="protein sequence ID" value="CAB78091.1"/>
    <property type="status" value="ALT_SEQ"/>
    <property type="molecule type" value="Genomic_DNA"/>
</dbReference>
<dbReference type="EMBL" id="CP002687">
    <property type="protein sequence ID" value="AEE82781.1"/>
    <property type="molecule type" value="Genomic_DNA"/>
</dbReference>
<dbReference type="EMBL" id="CP002687">
    <property type="protein sequence ID" value="ANM67742.1"/>
    <property type="molecule type" value="Genomic_DNA"/>
</dbReference>
<dbReference type="EMBL" id="AK230383">
    <property type="protein sequence ID" value="BAF02181.1"/>
    <property type="molecule type" value="mRNA"/>
</dbReference>
<dbReference type="PIR" id="T04015">
    <property type="entry name" value="T04015"/>
</dbReference>
<dbReference type="RefSeq" id="NP_001118960.1">
    <molecule id="D0EL35-2"/>
    <property type="nucleotide sequence ID" value="NM_001125488.2"/>
</dbReference>
<dbReference type="RefSeq" id="NP_001329551.1">
    <molecule id="D0EL35-1"/>
    <property type="nucleotide sequence ID" value="NM_001340629.1"/>
</dbReference>
<dbReference type="BioGRID" id="11853">
    <property type="interactions" value="2"/>
</dbReference>
<dbReference type="FunCoup" id="D0EL35">
    <property type="interactions" value="1182"/>
</dbReference>
<dbReference type="STRING" id="3702.D0EL35"/>
<dbReference type="PaxDb" id="3702-AT4G09680.1"/>
<dbReference type="ProteomicsDB" id="222723">
    <molecule id="D0EL35-1"/>
</dbReference>
<dbReference type="EnsemblPlants" id="AT4G09680.2">
    <molecule id="D0EL35-2"/>
    <property type="protein sequence ID" value="AT4G09680.2"/>
    <property type="gene ID" value="AT4G09680"/>
</dbReference>
<dbReference type="EnsemblPlants" id="AT4G09680.4">
    <molecule id="D0EL35-1"/>
    <property type="protein sequence ID" value="AT4G09680.4"/>
    <property type="gene ID" value="AT4G09680"/>
</dbReference>
<dbReference type="GeneID" id="826554"/>
<dbReference type="Gramene" id="AT4G09680.2">
    <molecule id="D0EL35-2"/>
    <property type="protein sequence ID" value="AT4G09680.2"/>
    <property type="gene ID" value="AT4G09680"/>
</dbReference>
<dbReference type="Gramene" id="AT4G09680.4">
    <molecule id="D0EL35-1"/>
    <property type="protein sequence ID" value="AT4G09680.4"/>
    <property type="gene ID" value="AT4G09680"/>
</dbReference>
<dbReference type="KEGG" id="ath:AT4G09680"/>
<dbReference type="Araport" id="AT4G09680"/>
<dbReference type="TAIR" id="AT4G09680">
    <property type="gene designation" value="CTC1"/>
</dbReference>
<dbReference type="eggNOG" id="ENOG502QU1G">
    <property type="taxonomic scope" value="Eukaryota"/>
</dbReference>
<dbReference type="InParanoid" id="D0EL35"/>
<dbReference type="PhylomeDB" id="D0EL35"/>
<dbReference type="PRO" id="PR:D0EL35"/>
<dbReference type="Proteomes" id="UP000006548">
    <property type="component" value="Chromosome 4"/>
</dbReference>
<dbReference type="ExpressionAtlas" id="D0EL35">
    <property type="expression patterns" value="baseline and differential"/>
</dbReference>
<dbReference type="GO" id="GO:0000781">
    <property type="term" value="C:chromosome, telomeric region"/>
    <property type="evidence" value="ECO:0007669"/>
    <property type="project" value="UniProtKB-SubCell"/>
</dbReference>
<dbReference type="GO" id="GO:0005634">
    <property type="term" value="C:nucleus"/>
    <property type="evidence" value="ECO:0007669"/>
    <property type="project" value="UniProtKB-SubCell"/>
</dbReference>
<dbReference type="GO" id="GO:0003677">
    <property type="term" value="F:DNA binding"/>
    <property type="evidence" value="ECO:0007669"/>
    <property type="project" value="UniProtKB-KW"/>
</dbReference>
<dbReference type="GO" id="GO:0000723">
    <property type="term" value="P:telomere maintenance"/>
    <property type="evidence" value="ECO:0007669"/>
    <property type="project" value="InterPro"/>
</dbReference>
<dbReference type="InterPro" id="IPR042617">
    <property type="entry name" value="CTC1-like"/>
</dbReference>
<dbReference type="InterPro" id="IPR028262">
    <property type="entry name" value="CTC1_plant"/>
</dbReference>
<dbReference type="PANTHER" id="PTHR14865">
    <property type="entry name" value="CST COMPLEX SUBUNIT CTC1"/>
    <property type="match status" value="1"/>
</dbReference>
<dbReference type="PANTHER" id="PTHR14865:SF2">
    <property type="entry name" value="CST COMPLEX SUBUNIT CTC1"/>
    <property type="match status" value="1"/>
</dbReference>
<dbReference type="Pfam" id="PF15491">
    <property type="entry name" value="CTC1_2"/>
    <property type="match status" value="1"/>
</dbReference>